<dbReference type="EMBL" id="CP000305">
    <property type="protein sequence ID" value="ABG19218.1"/>
    <property type="molecule type" value="Genomic_DNA"/>
</dbReference>
<dbReference type="EMBL" id="ACNQ01000017">
    <property type="protein sequence ID" value="EEO75365.1"/>
    <property type="molecule type" value="Genomic_DNA"/>
</dbReference>
<dbReference type="RefSeq" id="WP_002210720.1">
    <property type="nucleotide sequence ID" value="NZ_ACNQ01000017.1"/>
</dbReference>
<dbReference type="SMR" id="Q1CFL2"/>
<dbReference type="GeneID" id="57977243"/>
<dbReference type="KEGG" id="ypn:YPN_2891"/>
<dbReference type="HOGENOM" id="CLU_057217_6_0_6"/>
<dbReference type="Proteomes" id="UP000008936">
    <property type="component" value="Chromosome"/>
</dbReference>
<dbReference type="GO" id="GO:0005829">
    <property type="term" value="C:cytosol"/>
    <property type="evidence" value="ECO:0007669"/>
    <property type="project" value="TreeGrafter"/>
</dbReference>
<dbReference type="GO" id="GO:0000774">
    <property type="term" value="F:adenyl-nucleotide exchange factor activity"/>
    <property type="evidence" value="ECO:0007669"/>
    <property type="project" value="InterPro"/>
</dbReference>
<dbReference type="GO" id="GO:0042803">
    <property type="term" value="F:protein homodimerization activity"/>
    <property type="evidence" value="ECO:0007669"/>
    <property type="project" value="InterPro"/>
</dbReference>
<dbReference type="GO" id="GO:0051087">
    <property type="term" value="F:protein-folding chaperone binding"/>
    <property type="evidence" value="ECO:0007669"/>
    <property type="project" value="InterPro"/>
</dbReference>
<dbReference type="GO" id="GO:0051082">
    <property type="term" value="F:unfolded protein binding"/>
    <property type="evidence" value="ECO:0007669"/>
    <property type="project" value="TreeGrafter"/>
</dbReference>
<dbReference type="GO" id="GO:0006457">
    <property type="term" value="P:protein folding"/>
    <property type="evidence" value="ECO:0007669"/>
    <property type="project" value="InterPro"/>
</dbReference>
<dbReference type="CDD" id="cd00446">
    <property type="entry name" value="GrpE"/>
    <property type="match status" value="1"/>
</dbReference>
<dbReference type="FunFam" id="2.30.22.10:FF:000001">
    <property type="entry name" value="Protein GrpE"/>
    <property type="match status" value="1"/>
</dbReference>
<dbReference type="FunFam" id="3.90.20.20:FF:000001">
    <property type="entry name" value="Protein GrpE"/>
    <property type="match status" value="1"/>
</dbReference>
<dbReference type="Gene3D" id="3.90.20.20">
    <property type="match status" value="1"/>
</dbReference>
<dbReference type="Gene3D" id="2.30.22.10">
    <property type="entry name" value="Head domain of nucleotide exchange factor GrpE"/>
    <property type="match status" value="1"/>
</dbReference>
<dbReference type="HAMAP" id="MF_01151">
    <property type="entry name" value="GrpE"/>
    <property type="match status" value="1"/>
</dbReference>
<dbReference type="InterPro" id="IPR000740">
    <property type="entry name" value="GrpE"/>
</dbReference>
<dbReference type="InterPro" id="IPR013805">
    <property type="entry name" value="GrpE_coiled_coil"/>
</dbReference>
<dbReference type="InterPro" id="IPR009012">
    <property type="entry name" value="GrpE_head"/>
</dbReference>
<dbReference type="NCBIfam" id="NF010737">
    <property type="entry name" value="PRK14139.1"/>
    <property type="match status" value="1"/>
</dbReference>
<dbReference type="NCBIfam" id="NF010738">
    <property type="entry name" value="PRK14140.1"/>
    <property type="match status" value="1"/>
</dbReference>
<dbReference type="NCBIfam" id="NF010748">
    <property type="entry name" value="PRK14150.1"/>
    <property type="match status" value="1"/>
</dbReference>
<dbReference type="PANTHER" id="PTHR21237">
    <property type="entry name" value="GRPE PROTEIN"/>
    <property type="match status" value="1"/>
</dbReference>
<dbReference type="PANTHER" id="PTHR21237:SF23">
    <property type="entry name" value="GRPE PROTEIN HOMOLOG, MITOCHONDRIAL"/>
    <property type="match status" value="1"/>
</dbReference>
<dbReference type="Pfam" id="PF01025">
    <property type="entry name" value="GrpE"/>
    <property type="match status" value="1"/>
</dbReference>
<dbReference type="PRINTS" id="PR00773">
    <property type="entry name" value="GRPEPROTEIN"/>
</dbReference>
<dbReference type="SUPFAM" id="SSF58014">
    <property type="entry name" value="Coiled-coil domain of nucleotide exchange factor GrpE"/>
    <property type="match status" value="1"/>
</dbReference>
<dbReference type="SUPFAM" id="SSF51064">
    <property type="entry name" value="Head domain of nucleotide exchange factor GrpE"/>
    <property type="match status" value="1"/>
</dbReference>
<dbReference type="PROSITE" id="PS01071">
    <property type="entry name" value="GRPE"/>
    <property type="match status" value="1"/>
</dbReference>
<accession>Q1CFL2</accession>
<accession>C4GWR5</accession>
<proteinExistence type="inferred from homology"/>
<evidence type="ECO:0000255" key="1">
    <source>
        <dbReference type="HAMAP-Rule" id="MF_01151"/>
    </source>
</evidence>
<evidence type="ECO:0000256" key="2">
    <source>
        <dbReference type="SAM" id="MobiDB-lite"/>
    </source>
</evidence>
<reference key="1">
    <citation type="journal article" date="2006" name="J. Bacteriol.">
        <title>Complete genome sequence of Yersinia pestis strains Antiqua and Nepal516: evidence of gene reduction in an emerging pathogen.</title>
        <authorList>
            <person name="Chain P.S.G."/>
            <person name="Hu P."/>
            <person name="Malfatti S.A."/>
            <person name="Radnedge L."/>
            <person name="Larimer F."/>
            <person name="Vergez L.M."/>
            <person name="Worsham P."/>
            <person name="Chu M.C."/>
            <person name="Andersen G.L."/>
        </authorList>
    </citation>
    <scope>NUCLEOTIDE SEQUENCE [LARGE SCALE GENOMIC DNA]</scope>
    <source>
        <strain>Nepal516</strain>
    </source>
</reference>
<reference key="2">
    <citation type="submission" date="2009-04" db="EMBL/GenBank/DDBJ databases">
        <title>Yersinia pestis Nepal516A whole genome shotgun sequencing project.</title>
        <authorList>
            <person name="Plunkett G. III"/>
            <person name="Anderson B.D."/>
            <person name="Baumler D.J."/>
            <person name="Burland V."/>
            <person name="Cabot E.L."/>
            <person name="Glasner J.D."/>
            <person name="Mau B."/>
            <person name="Neeno-Eckwall E."/>
            <person name="Perna N.T."/>
            <person name="Munk A.C."/>
            <person name="Tapia R."/>
            <person name="Green L.D."/>
            <person name="Rogers Y.C."/>
            <person name="Detter J.C."/>
            <person name="Bruce D.C."/>
            <person name="Brettin T.S."/>
        </authorList>
    </citation>
    <scope>NUCLEOTIDE SEQUENCE [LARGE SCALE GENOMIC DNA]</scope>
    <source>
        <strain>Nepal516</strain>
    </source>
</reference>
<keyword id="KW-0143">Chaperone</keyword>
<keyword id="KW-0963">Cytoplasm</keyword>
<keyword id="KW-0346">Stress response</keyword>
<gene>
    <name evidence="1" type="primary">grpE</name>
    <name type="ordered locus">YPN_2891</name>
    <name type="ORF">YP516_3270</name>
</gene>
<name>GRPE_YERPN</name>
<comment type="function">
    <text evidence="1">Participates actively in the response to hyperosmotic and heat shock by preventing the aggregation of stress-denatured proteins, in association with DnaK and GrpE. It is the nucleotide exchange factor for DnaK and may function as a thermosensor. Unfolded proteins bind initially to DnaJ; upon interaction with the DnaJ-bound protein, DnaK hydrolyzes its bound ATP, resulting in the formation of a stable complex. GrpE releases ADP from DnaK; ATP binding to DnaK triggers the release of the substrate protein, thus completing the reaction cycle. Several rounds of ATP-dependent interactions between DnaJ, DnaK and GrpE are required for fully efficient folding.</text>
</comment>
<comment type="subunit">
    <text evidence="1">Homodimer.</text>
</comment>
<comment type="subcellular location">
    <subcellularLocation>
        <location evidence="1">Cytoplasm</location>
    </subcellularLocation>
</comment>
<comment type="similarity">
    <text evidence="1">Belongs to the GrpE family.</text>
</comment>
<protein>
    <recommendedName>
        <fullName evidence="1">Protein GrpE</fullName>
    </recommendedName>
    <alternativeName>
        <fullName evidence="1">HSP-70 cofactor</fullName>
    </alternativeName>
</protein>
<organism>
    <name type="scientific">Yersinia pestis bv. Antiqua (strain Nepal516)</name>
    <dbReference type="NCBI Taxonomy" id="377628"/>
    <lineage>
        <taxon>Bacteria</taxon>
        <taxon>Pseudomonadati</taxon>
        <taxon>Pseudomonadota</taxon>
        <taxon>Gammaproteobacteria</taxon>
        <taxon>Enterobacterales</taxon>
        <taxon>Yersiniaceae</taxon>
        <taxon>Yersinia</taxon>
    </lineage>
</organism>
<sequence length="192" mass="21557">MSSKEQKTPNEQVSEEMENTAEQQVEATQETGECVDPRVAELEVQLSDALQRERESLLRAKAEVENIRRRTELDVEKAHKFALERFSSELLPVIDNLERALDTADKTNTELISMIEGVELTLKSLLDAVGKFGIEVVGETHVPFNPEVHQAMTMLESADHEPNHVMMVMQKGYTLNGRLLRPAMVAVSKAKS</sequence>
<feature type="chain" id="PRO_1000053666" description="Protein GrpE">
    <location>
        <begin position="1"/>
        <end position="192"/>
    </location>
</feature>
<feature type="region of interest" description="Disordered" evidence="2">
    <location>
        <begin position="1"/>
        <end position="34"/>
    </location>
</feature>
<feature type="compositionally biased region" description="Polar residues" evidence="2">
    <location>
        <begin position="20"/>
        <end position="31"/>
    </location>
</feature>